<accession>A4TMV6</accession>
<sequence>MLHNIRIVLVETSHTGNMGSTARAMKTMGLTNLYLVNPLVKPDSQAIALSAGASDVIGKATIVDTLDEALAGCSLVVGTSARSRTLPWPMLEPRECGVRSAREAEHAPVALVFGRERVGLTNDELQKCHYHVAIPANPEYSSLNLAMAVQILAYEVRVAYLDRQQANAPVEEEEEAPYPLVDDLERFYQHLEQVLSHSGFIRQAHPGQIMSKLRRLFTRARPEAQELNILRGMLTSIEKQDKYPQRGTGDTAGKSKD</sequence>
<reference key="1">
    <citation type="submission" date="2007-02" db="EMBL/GenBank/DDBJ databases">
        <title>Complete sequence of chromosome of Yersinia pestis Pestoides F.</title>
        <authorList>
            <consortium name="US DOE Joint Genome Institute"/>
            <person name="Copeland A."/>
            <person name="Lucas S."/>
            <person name="Lapidus A."/>
            <person name="Barry K."/>
            <person name="Detter J.C."/>
            <person name="Glavina del Rio T."/>
            <person name="Hammon N."/>
            <person name="Israni S."/>
            <person name="Dalin E."/>
            <person name="Tice H."/>
            <person name="Pitluck S."/>
            <person name="Di Bartolo G."/>
            <person name="Chain P."/>
            <person name="Malfatti S."/>
            <person name="Shin M."/>
            <person name="Vergez L."/>
            <person name="Schmutz J."/>
            <person name="Larimer F."/>
            <person name="Land M."/>
            <person name="Hauser L."/>
            <person name="Worsham P."/>
            <person name="Chu M."/>
            <person name="Bearden S."/>
            <person name="Garcia E."/>
            <person name="Richardson P."/>
        </authorList>
    </citation>
    <scope>NUCLEOTIDE SEQUENCE [LARGE SCALE GENOMIC DNA]</scope>
    <source>
        <strain>Pestoides F</strain>
    </source>
</reference>
<evidence type="ECO:0000250" key="1">
    <source>
        <dbReference type="UniProtKB" id="P0AE01"/>
    </source>
</evidence>
<evidence type="ECO:0000256" key="2">
    <source>
        <dbReference type="SAM" id="MobiDB-lite"/>
    </source>
</evidence>
<evidence type="ECO:0000305" key="3"/>
<organism>
    <name type="scientific">Yersinia pestis (strain Pestoides F)</name>
    <dbReference type="NCBI Taxonomy" id="386656"/>
    <lineage>
        <taxon>Bacteria</taxon>
        <taxon>Pseudomonadati</taxon>
        <taxon>Pseudomonadota</taxon>
        <taxon>Gammaproteobacteria</taxon>
        <taxon>Enterobacterales</taxon>
        <taxon>Yersiniaceae</taxon>
        <taxon>Yersinia</taxon>
    </lineage>
</organism>
<proteinExistence type="inferred from homology"/>
<name>TRMJ_YERPP</name>
<gene>
    <name type="primary">trmJ</name>
    <name type="ordered locus">YPDSF_2243</name>
</gene>
<keyword id="KW-0963">Cytoplasm</keyword>
<keyword id="KW-0489">Methyltransferase</keyword>
<keyword id="KW-0949">S-adenosyl-L-methionine</keyword>
<keyword id="KW-0808">Transferase</keyword>
<keyword id="KW-0819">tRNA processing</keyword>
<protein>
    <recommendedName>
        <fullName evidence="1">tRNA (cytidine/uridine-2'-O-)-methyltransferase TrmJ</fullName>
        <ecNumber evidence="1">2.1.1.200</ecNumber>
    </recommendedName>
    <alternativeName>
        <fullName evidence="1">tRNA (cytidine(32)/uridine(32)-2'-O)-methyltransferase</fullName>
    </alternativeName>
    <alternativeName>
        <fullName evidence="1">tRNA Cm32/Um32 methyltransferase</fullName>
    </alternativeName>
</protein>
<feature type="chain" id="PRO_0000313870" description="tRNA (cytidine/uridine-2'-O-)-methyltransferase TrmJ">
    <location>
        <begin position="1"/>
        <end position="257"/>
    </location>
</feature>
<feature type="region of interest" description="Disordered" evidence="2">
    <location>
        <begin position="238"/>
        <end position="257"/>
    </location>
</feature>
<feature type="binding site" evidence="1">
    <location>
        <begin position="79"/>
        <end position="81"/>
    </location>
    <ligand>
        <name>S-adenosyl-L-methionine</name>
        <dbReference type="ChEBI" id="CHEBI:59789"/>
    </ligand>
</feature>
<feature type="binding site" evidence="1">
    <location>
        <position position="114"/>
    </location>
    <ligand>
        <name>S-adenosyl-L-methionine</name>
        <dbReference type="ChEBI" id="CHEBI:59789"/>
    </ligand>
</feature>
<feature type="binding site" evidence="1">
    <location>
        <position position="134"/>
    </location>
    <ligand>
        <name>S-adenosyl-L-methionine</name>
        <dbReference type="ChEBI" id="CHEBI:59789"/>
    </ligand>
</feature>
<feature type="binding site" evidence="1">
    <location>
        <begin position="141"/>
        <end position="143"/>
    </location>
    <ligand>
        <name>S-adenosyl-L-methionine</name>
        <dbReference type="ChEBI" id="CHEBI:59789"/>
    </ligand>
</feature>
<comment type="function">
    <text evidence="1">Catalyzes the formation of 2'O-methylated cytidine (Cm32) or 2'O-methylated uridine (Um32) at position 32 in tRNA.</text>
</comment>
<comment type="catalytic activity">
    <reaction evidence="1">
        <text>cytidine(32) in tRNA + S-adenosyl-L-methionine = 2'-O-methylcytidine(32) in tRNA + S-adenosyl-L-homocysteine + H(+)</text>
        <dbReference type="Rhea" id="RHEA:42932"/>
        <dbReference type="Rhea" id="RHEA-COMP:10288"/>
        <dbReference type="Rhea" id="RHEA-COMP:10289"/>
        <dbReference type="ChEBI" id="CHEBI:15378"/>
        <dbReference type="ChEBI" id="CHEBI:57856"/>
        <dbReference type="ChEBI" id="CHEBI:59789"/>
        <dbReference type="ChEBI" id="CHEBI:74495"/>
        <dbReference type="ChEBI" id="CHEBI:82748"/>
        <dbReference type="EC" id="2.1.1.200"/>
    </reaction>
</comment>
<comment type="catalytic activity">
    <reaction evidence="1">
        <text>uridine(32) in tRNA + S-adenosyl-L-methionine = 2'-O-methyluridine(32) in tRNA + S-adenosyl-L-homocysteine + H(+)</text>
        <dbReference type="Rhea" id="RHEA:42936"/>
        <dbReference type="Rhea" id="RHEA-COMP:10107"/>
        <dbReference type="Rhea" id="RHEA-COMP:10290"/>
        <dbReference type="ChEBI" id="CHEBI:15378"/>
        <dbReference type="ChEBI" id="CHEBI:57856"/>
        <dbReference type="ChEBI" id="CHEBI:59789"/>
        <dbReference type="ChEBI" id="CHEBI:65315"/>
        <dbReference type="ChEBI" id="CHEBI:74478"/>
        <dbReference type="EC" id="2.1.1.200"/>
    </reaction>
</comment>
<comment type="subunit">
    <text evidence="1">Homodimer.</text>
</comment>
<comment type="subcellular location">
    <subcellularLocation>
        <location evidence="1">Cytoplasm</location>
    </subcellularLocation>
</comment>
<comment type="similarity">
    <text evidence="3">Belongs to the class IV-like SAM-binding methyltransferase superfamily. RNA methyltransferase TrmH family.</text>
</comment>
<dbReference type="EC" id="2.1.1.200" evidence="1"/>
<dbReference type="EMBL" id="CP000668">
    <property type="protein sequence ID" value="ABP40618.1"/>
    <property type="molecule type" value="Genomic_DNA"/>
</dbReference>
<dbReference type="RefSeq" id="WP_002217034.1">
    <property type="nucleotide sequence ID" value="NZ_CP009715.1"/>
</dbReference>
<dbReference type="SMR" id="A4TMV6"/>
<dbReference type="GeneID" id="57975855"/>
<dbReference type="KEGG" id="ypp:YPDSF_2243"/>
<dbReference type="PATRIC" id="fig|386656.14.peg.3732"/>
<dbReference type="GO" id="GO:0005829">
    <property type="term" value="C:cytosol"/>
    <property type="evidence" value="ECO:0007669"/>
    <property type="project" value="TreeGrafter"/>
</dbReference>
<dbReference type="GO" id="GO:0003723">
    <property type="term" value="F:RNA binding"/>
    <property type="evidence" value="ECO:0007669"/>
    <property type="project" value="InterPro"/>
</dbReference>
<dbReference type="GO" id="GO:0160206">
    <property type="term" value="F:tRNA (cytidine(32)/uridine(32)-2'-O)-methyltransferase activity"/>
    <property type="evidence" value="ECO:0007669"/>
    <property type="project" value="UniProtKB-EC"/>
</dbReference>
<dbReference type="GO" id="GO:0002128">
    <property type="term" value="P:tRNA nucleoside ribose methylation"/>
    <property type="evidence" value="ECO:0007669"/>
    <property type="project" value="TreeGrafter"/>
</dbReference>
<dbReference type="CDD" id="cd18093">
    <property type="entry name" value="SpoU-like_TrmJ"/>
    <property type="match status" value="1"/>
</dbReference>
<dbReference type="FunFam" id="1.10.8.590:FF:000001">
    <property type="entry name" value="tRNA:Cm32/Um32 methyltransferase"/>
    <property type="match status" value="1"/>
</dbReference>
<dbReference type="FunFam" id="3.40.1280.10:FF:000006">
    <property type="entry name" value="Uncharacterized tRNA/rRNA methyltransferase HI_0380"/>
    <property type="match status" value="1"/>
</dbReference>
<dbReference type="Gene3D" id="1.10.8.590">
    <property type="match status" value="1"/>
</dbReference>
<dbReference type="Gene3D" id="3.40.1280.10">
    <property type="match status" value="1"/>
</dbReference>
<dbReference type="InterPro" id="IPR029028">
    <property type="entry name" value="Alpha/beta_knot_MTases"/>
</dbReference>
<dbReference type="InterPro" id="IPR004384">
    <property type="entry name" value="RNA_MeTrfase_TrmJ/LasT"/>
</dbReference>
<dbReference type="InterPro" id="IPR001537">
    <property type="entry name" value="SpoU_MeTrfase"/>
</dbReference>
<dbReference type="InterPro" id="IPR029026">
    <property type="entry name" value="tRNA_m1G_MTases_N"/>
</dbReference>
<dbReference type="NCBIfam" id="NF011694">
    <property type="entry name" value="PRK15114.1"/>
    <property type="match status" value="1"/>
</dbReference>
<dbReference type="NCBIfam" id="TIGR00050">
    <property type="entry name" value="rRNA_methyl_1"/>
    <property type="match status" value="1"/>
</dbReference>
<dbReference type="PANTHER" id="PTHR42786:SF2">
    <property type="entry name" value="TRNA (CYTIDINE_URIDINE-2'-O-)-METHYLTRANSFERASE TRMJ"/>
    <property type="match status" value="1"/>
</dbReference>
<dbReference type="PANTHER" id="PTHR42786">
    <property type="entry name" value="TRNA/RRNA METHYLTRANSFERASE"/>
    <property type="match status" value="1"/>
</dbReference>
<dbReference type="Pfam" id="PF00588">
    <property type="entry name" value="SpoU_methylase"/>
    <property type="match status" value="1"/>
</dbReference>
<dbReference type="PIRSF" id="PIRSF004808">
    <property type="entry name" value="LasT"/>
    <property type="match status" value="1"/>
</dbReference>
<dbReference type="SUPFAM" id="SSF75217">
    <property type="entry name" value="alpha/beta knot"/>
    <property type="match status" value="1"/>
</dbReference>